<keyword id="KW-0408">Iron</keyword>
<keyword id="KW-0411">Iron-sulfur</keyword>
<keyword id="KW-0479">Metal-binding</keyword>
<keyword id="KW-1185">Reference proteome</keyword>
<reference key="1">
    <citation type="submission" date="2005-08" db="EMBL/GenBank/DDBJ databases">
        <title>Complete sequence of chromosome 1 of Nitrosospira multiformis ATCC 25196.</title>
        <authorList>
            <person name="Copeland A."/>
            <person name="Lucas S."/>
            <person name="Lapidus A."/>
            <person name="Barry K."/>
            <person name="Detter J.C."/>
            <person name="Glavina T."/>
            <person name="Hammon N."/>
            <person name="Israni S."/>
            <person name="Pitluck S."/>
            <person name="Chain P."/>
            <person name="Malfatti S."/>
            <person name="Shin M."/>
            <person name="Vergez L."/>
            <person name="Schmutz J."/>
            <person name="Larimer F."/>
            <person name="Land M."/>
            <person name="Hauser L."/>
            <person name="Kyrpides N."/>
            <person name="Lykidis A."/>
            <person name="Richardson P."/>
        </authorList>
    </citation>
    <scope>NUCLEOTIDE SEQUENCE [LARGE SCALE GENOMIC DNA]</scope>
    <source>
        <strain>ATCC 25196 / NCIMB 11849 / C 71</strain>
    </source>
</reference>
<accession>Q2YBK7</accession>
<feature type="chain" id="PRO_0000311514" description="Putative iron-sulfur cluster insertion protein ErpA">
    <location>
        <begin position="1"/>
        <end position="127"/>
    </location>
</feature>
<feature type="region of interest" description="Disordered" evidence="2">
    <location>
        <begin position="1"/>
        <end position="20"/>
    </location>
</feature>
<feature type="compositionally biased region" description="Polar residues" evidence="2">
    <location>
        <begin position="1"/>
        <end position="14"/>
    </location>
</feature>
<feature type="binding site" evidence="1">
    <location>
        <position position="55"/>
    </location>
    <ligand>
        <name>iron-sulfur cluster</name>
        <dbReference type="ChEBI" id="CHEBI:30408"/>
    </ligand>
</feature>
<feature type="binding site" evidence="1">
    <location>
        <position position="119"/>
    </location>
    <ligand>
        <name>iron-sulfur cluster</name>
        <dbReference type="ChEBI" id="CHEBI:30408"/>
    </ligand>
</feature>
<feature type="binding site" evidence="1">
    <location>
        <position position="121"/>
    </location>
    <ligand>
        <name>iron-sulfur cluster</name>
        <dbReference type="ChEBI" id="CHEBI:30408"/>
    </ligand>
</feature>
<name>ERPA_NITMU</name>
<sequence length="127" mass="13621">MNTPFNDGSGQTDPMTDIPTPLIFTDNAANKVRELIEEEGNNDLKLRVFVAGGGCSGFKYGFTFDELISEDDTVMEKNGVKLLVDAMSFQYLAGAEIDYQENAEGAQFIIKNPGAASTCGCGSSFSV</sequence>
<dbReference type="EMBL" id="CP000103">
    <property type="protein sequence ID" value="ABB73864.1"/>
    <property type="molecule type" value="Genomic_DNA"/>
</dbReference>
<dbReference type="RefSeq" id="WP_049783052.1">
    <property type="nucleotide sequence ID" value="NC_007614.1"/>
</dbReference>
<dbReference type="SMR" id="Q2YBK7"/>
<dbReference type="STRING" id="323848.Nmul_A0556"/>
<dbReference type="KEGG" id="nmu:Nmul_A0556"/>
<dbReference type="eggNOG" id="COG0316">
    <property type="taxonomic scope" value="Bacteria"/>
</dbReference>
<dbReference type="HOGENOM" id="CLU_069054_5_3_4"/>
<dbReference type="Proteomes" id="UP000002718">
    <property type="component" value="Chromosome"/>
</dbReference>
<dbReference type="GO" id="GO:0051537">
    <property type="term" value="F:2 iron, 2 sulfur cluster binding"/>
    <property type="evidence" value="ECO:0007669"/>
    <property type="project" value="UniProtKB-ARBA"/>
</dbReference>
<dbReference type="GO" id="GO:0051539">
    <property type="term" value="F:4 iron, 4 sulfur cluster binding"/>
    <property type="evidence" value="ECO:0007669"/>
    <property type="project" value="TreeGrafter"/>
</dbReference>
<dbReference type="GO" id="GO:0005506">
    <property type="term" value="F:iron ion binding"/>
    <property type="evidence" value="ECO:0007669"/>
    <property type="project" value="UniProtKB-UniRule"/>
</dbReference>
<dbReference type="GO" id="GO:0016226">
    <property type="term" value="P:iron-sulfur cluster assembly"/>
    <property type="evidence" value="ECO:0007669"/>
    <property type="project" value="UniProtKB-UniRule"/>
</dbReference>
<dbReference type="FunFam" id="2.60.300.12:FF:000002">
    <property type="entry name" value="Iron-sulfur cluster insertion protein ErpA"/>
    <property type="match status" value="1"/>
</dbReference>
<dbReference type="Gene3D" id="2.60.300.12">
    <property type="entry name" value="HesB-like domain"/>
    <property type="match status" value="1"/>
</dbReference>
<dbReference type="HAMAP" id="MF_01380">
    <property type="entry name" value="Fe_S_insert_ErpA"/>
    <property type="match status" value="1"/>
</dbReference>
<dbReference type="InterPro" id="IPR000361">
    <property type="entry name" value="FeS_biogenesis"/>
</dbReference>
<dbReference type="InterPro" id="IPR016092">
    <property type="entry name" value="FeS_cluster_insertion"/>
</dbReference>
<dbReference type="InterPro" id="IPR023063">
    <property type="entry name" value="FeS_cluster_insertion_RrpA"/>
</dbReference>
<dbReference type="InterPro" id="IPR035903">
    <property type="entry name" value="HesB-like_dom_sf"/>
</dbReference>
<dbReference type="NCBIfam" id="TIGR00049">
    <property type="entry name" value="iron-sulfur cluster assembly accessory protein"/>
    <property type="match status" value="1"/>
</dbReference>
<dbReference type="NCBIfam" id="NF010147">
    <property type="entry name" value="PRK13623.1"/>
    <property type="match status" value="1"/>
</dbReference>
<dbReference type="PANTHER" id="PTHR43011">
    <property type="entry name" value="IRON-SULFUR CLUSTER ASSEMBLY 2 HOMOLOG, MITOCHONDRIAL"/>
    <property type="match status" value="1"/>
</dbReference>
<dbReference type="PANTHER" id="PTHR43011:SF1">
    <property type="entry name" value="IRON-SULFUR CLUSTER ASSEMBLY 2 HOMOLOG, MITOCHONDRIAL"/>
    <property type="match status" value="1"/>
</dbReference>
<dbReference type="Pfam" id="PF01521">
    <property type="entry name" value="Fe-S_biosyn"/>
    <property type="match status" value="1"/>
</dbReference>
<dbReference type="SUPFAM" id="SSF89360">
    <property type="entry name" value="HesB-like domain"/>
    <property type="match status" value="1"/>
</dbReference>
<gene>
    <name evidence="1" type="primary">erpA</name>
    <name type="ordered locus">Nmul_A0556</name>
</gene>
<evidence type="ECO:0000255" key="1">
    <source>
        <dbReference type="HAMAP-Rule" id="MF_01380"/>
    </source>
</evidence>
<evidence type="ECO:0000256" key="2">
    <source>
        <dbReference type="SAM" id="MobiDB-lite"/>
    </source>
</evidence>
<proteinExistence type="inferred from homology"/>
<organism>
    <name type="scientific">Nitrosospira multiformis (strain ATCC 25196 / NCIMB 11849 / C 71)</name>
    <dbReference type="NCBI Taxonomy" id="323848"/>
    <lineage>
        <taxon>Bacteria</taxon>
        <taxon>Pseudomonadati</taxon>
        <taxon>Pseudomonadota</taxon>
        <taxon>Betaproteobacteria</taxon>
        <taxon>Nitrosomonadales</taxon>
        <taxon>Nitrosomonadaceae</taxon>
        <taxon>Nitrosospira</taxon>
    </lineage>
</organism>
<protein>
    <recommendedName>
        <fullName evidence="1">Putative iron-sulfur cluster insertion protein ErpA</fullName>
    </recommendedName>
</protein>
<comment type="function">
    <text evidence="1">Required for insertion of 4Fe-4S clusters.</text>
</comment>
<comment type="cofactor">
    <cofactor evidence="1">
        <name>iron-sulfur cluster</name>
        <dbReference type="ChEBI" id="CHEBI:30408"/>
    </cofactor>
    <text evidence="1">Binds 1 iron-sulfur cluster per subunit.</text>
</comment>
<comment type="subunit">
    <text evidence="1">Homodimer.</text>
</comment>
<comment type="similarity">
    <text evidence="1">Belongs to the HesB/IscA family.</text>
</comment>